<name>F16PA_ACIAD</name>
<gene>
    <name evidence="1" type="primary">fbp</name>
    <name type="ordered locus">ACIAD2625</name>
</gene>
<accession>Q6F982</accession>
<comment type="catalytic activity">
    <reaction evidence="1">
        <text>beta-D-fructose 1,6-bisphosphate + H2O = beta-D-fructose 6-phosphate + phosphate</text>
        <dbReference type="Rhea" id="RHEA:11064"/>
        <dbReference type="ChEBI" id="CHEBI:15377"/>
        <dbReference type="ChEBI" id="CHEBI:32966"/>
        <dbReference type="ChEBI" id="CHEBI:43474"/>
        <dbReference type="ChEBI" id="CHEBI:57634"/>
        <dbReference type="EC" id="3.1.3.11"/>
    </reaction>
</comment>
<comment type="cofactor">
    <cofactor evidence="1">
        <name>Mg(2+)</name>
        <dbReference type="ChEBI" id="CHEBI:18420"/>
    </cofactor>
    <text evidence="1">Binds 2 magnesium ions per subunit.</text>
</comment>
<comment type="pathway">
    <text evidence="1">Carbohydrate biosynthesis; gluconeogenesis.</text>
</comment>
<comment type="subunit">
    <text evidence="1">Homotetramer.</text>
</comment>
<comment type="subcellular location">
    <subcellularLocation>
        <location evidence="1">Cytoplasm</location>
    </subcellularLocation>
</comment>
<comment type="similarity">
    <text evidence="1">Belongs to the FBPase class 1 family.</text>
</comment>
<keyword id="KW-0119">Carbohydrate metabolism</keyword>
<keyword id="KW-0963">Cytoplasm</keyword>
<keyword id="KW-0378">Hydrolase</keyword>
<keyword id="KW-0460">Magnesium</keyword>
<keyword id="KW-0479">Metal-binding</keyword>
<protein>
    <recommendedName>
        <fullName evidence="1">Fructose-1,6-bisphosphatase class 1</fullName>
        <shortName evidence="1">FBPase class 1</shortName>
        <ecNumber evidence="1">3.1.3.11</ecNumber>
    </recommendedName>
    <alternativeName>
        <fullName evidence="1">D-fructose-1,6-bisphosphate 1-phosphohydrolase class 1</fullName>
    </alternativeName>
</protein>
<evidence type="ECO:0000255" key="1">
    <source>
        <dbReference type="HAMAP-Rule" id="MF_01855"/>
    </source>
</evidence>
<reference key="1">
    <citation type="journal article" date="2004" name="Nucleic Acids Res.">
        <title>Unique features revealed by the genome sequence of Acinetobacter sp. ADP1, a versatile and naturally transformation competent bacterium.</title>
        <authorList>
            <person name="Barbe V."/>
            <person name="Vallenet D."/>
            <person name="Fonknechten N."/>
            <person name="Kreimeyer A."/>
            <person name="Oztas S."/>
            <person name="Labarre L."/>
            <person name="Cruveiller S."/>
            <person name="Robert C."/>
            <person name="Duprat S."/>
            <person name="Wincker P."/>
            <person name="Ornston L.N."/>
            <person name="Weissenbach J."/>
            <person name="Marliere P."/>
            <person name="Cohen G.N."/>
            <person name="Medigue C."/>
        </authorList>
    </citation>
    <scope>NUCLEOTIDE SEQUENCE [LARGE SCALE GENOMIC DNA]</scope>
    <source>
        <strain>ATCC 33305 / BD413 / ADP1</strain>
    </source>
</reference>
<dbReference type="EC" id="3.1.3.11" evidence="1"/>
<dbReference type="EMBL" id="CR543861">
    <property type="protein sequence ID" value="CAG69383.1"/>
    <property type="molecule type" value="Genomic_DNA"/>
</dbReference>
<dbReference type="RefSeq" id="WP_004928847.1">
    <property type="nucleotide sequence ID" value="NC_005966.1"/>
</dbReference>
<dbReference type="SMR" id="Q6F982"/>
<dbReference type="STRING" id="202950.GCA_001485005_02273"/>
<dbReference type="GeneID" id="45234904"/>
<dbReference type="KEGG" id="aci:ACIAD2625"/>
<dbReference type="eggNOG" id="COG0158">
    <property type="taxonomic scope" value="Bacteria"/>
</dbReference>
<dbReference type="HOGENOM" id="CLU_039977_0_0_6"/>
<dbReference type="OrthoDB" id="9806756at2"/>
<dbReference type="BioCyc" id="ASP62977:ACIAD_RS11935-MONOMER"/>
<dbReference type="UniPathway" id="UPA00138"/>
<dbReference type="Proteomes" id="UP000000430">
    <property type="component" value="Chromosome"/>
</dbReference>
<dbReference type="GO" id="GO:0005829">
    <property type="term" value="C:cytosol"/>
    <property type="evidence" value="ECO:0007669"/>
    <property type="project" value="TreeGrafter"/>
</dbReference>
<dbReference type="GO" id="GO:0042132">
    <property type="term" value="F:fructose 1,6-bisphosphate 1-phosphatase activity"/>
    <property type="evidence" value="ECO:0007669"/>
    <property type="project" value="UniProtKB-UniRule"/>
</dbReference>
<dbReference type="GO" id="GO:0000287">
    <property type="term" value="F:magnesium ion binding"/>
    <property type="evidence" value="ECO:0007669"/>
    <property type="project" value="UniProtKB-UniRule"/>
</dbReference>
<dbReference type="GO" id="GO:0030388">
    <property type="term" value="P:fructose 1,6-bisphosphate metabolic process"/>
    <property type="evidence" value="ECO:0007669"/>
    <property type="project" value="TreeGrafter"/>
</dbReference>
<dbReference type="GO" id="GO:0006002">
    <property type="term" value="P:fructose 6-phosphate metabolic process"/>
    <property type="evidence" value="ECO:0007669"/>
    <property type="project" value="TreeGrafter"/>
</dbReference>
<dbReference type="GO" id="GO:0006000">
    <property type="term" value="P:fructose metabolic process"/>
    <property type="evidence" value="ECO:0007669"/>
    <property type="project" value="TreeGrafter"/>
</dbReference>
<dbReference type="GO" id="GO:0006094">
    <property type="term" value="P:gluconeogenesis"/>
    <property type="evidence" value="ECO:0007669"/>
    <property type="project" value="UniProtKB-UniRule"/>
</dbReference>
<dbReference type="GO" id="GO:0005986">
    <property type="term" value="P:sucrose biosynthetic process"/>
    <property type="evidence" value="ECO:0007669"/>
    <property type="project" value="TreeGrafter"/>
</dbReference>
<dbReference type="CDD" id="cd00354">
    <property type="entry name" value="FBPase"/>
    <property type="match status" value="1"/>
</dbReference>
<dbReference type="FunFam" id="3.30.540.10:FF:000002">
    <property type="entry name" value="Fructose-1,6-bisphosphatase class 1"/>
    <property type="match status" value="1"/>
</dbReference>
<dbReference type="FunFam" id="3.40.190.80:FF:000011">
    <property type="entry name" value="Fructose-1,6-bisphosphatase class 1"/>
    <property type="match status" value="1"/>
</dbReference>
<dbReference type="Gene3D" id="3.40.190.80">
    <property type="match status" value="1"/>
</dbReference>
<dbReference type="Gene3D" id="3.30.540.10">
    <property type="entry name" value="Fructose-1,6-Bisphosphatase, subunit A, domain 1"/>
    <property type="match status" value="1"/>
</dbReference>
<dbReference type="HAMAP" id="MF_01855">
    <property type="entry name" value="FBPase_class1"/>
    <property type="match status" value="1"/>
</dbReference>
<dbReference type="InterPro" id="IPR044015">
    <property type="entry name" value="FBPase_C_dom"/>
</dbReference>
<dbReference type="InterPro" id="IPR000146">
    <property type="entry name" value="FBPase_class-1"/>
</dbReference>
<dbReference type="InterPro" id="IPR033391">
    <property type="entry name" value="FBPase_N"/>
</dbReference>
<dbReference type="InterPro" id="IPR028343">
    <property type="entry name" value="FBPtase"/>
</dbReference>
<dbReference type="NCBIfam" id="NF006779">
    <property type="entry name" value="PRK09293.1-3"/>
    <property type="match status" value="1"/>
</dbReference>
<dbReference type="NCBIfam" id="NF006780">
    <property type="entry name" value="PRK09293.1-4"/>
    <property type="match status" value="1"/>
</dbReference>
<dbReference type="PANTHER" id="PTHR11556">
    <property type="entry name" value="FRUCTOSE-1,6-BISPHOSPHATASE-RELATED"/>
    <property type="match status" value="1"/>
</dbReference>
<dbReference type="PANTHER" id="PTHR11556:SF35">
    <property type="entry name" value="SEDOHEPTULOSE-1,7-BISPHOSPHATASE, CHLOROPLASTIC"/>
    <property type="match status" value="1"/>
</dbReference>
<dbReference type="Pfam" id="PF00316">
    <property type="entry name" value="FBPase"/>
    <property type="match status" value="1"/>
</dbReference>
<dbReference type="Pfam" id="PF18913">
    <property type="entry name" value="FBPase_C"/>
    <property type="match status" value="1"/>
</dbReference>
<dbReference type="PIRSF" id="PIRSF500210">
    <property type="entry name" value="FBPtase"/>
    <property type="match status" value="1"/>
</dbReference>
<dbReference type="PIRSF" id="PIRSF000904">
    <property type="entry name" value="FBPtase_SBPase"/>
    <property type="match status" value="1"/>
</dbReference>
<dbReference type="PRINTS" id="PR00115">
    <property type="entry name" value="F16BPHPHTASE"/>
</dbReference>
<dbReference type="SUPFAM" id="SSF56655">
    <property type="entry name" value="Carbohydrate phosphatase"/>
    <property type="match status" value="1"/>
</dbReference>
<proteinExistence type="inferred from homology"/>
<organism>
    <name type="scientific">Acinetobacter baylyi (strain ATCC 33305 / BD413 / ADP1)</name>
    <dbReference type="NCBI Taxonomy" id="62977"/>
    <lineage>
        <taxon>Bacteria</taxon>
        <taxon>Pseudomonadati</taxon>
        <taxon>Pseudomonadota</taxon>
        <taxon>Gammaproteobacteria</taxon>
        <taxon>Moraxellales</taxon>
        <taxon>Moraxellaceae</taxon>
        <taxon>Acinetobacter</taxon>
    </lineage>
</organism>
<sequence>MSNLTLAQYLQQKNGNLTPELAQVIETIANSCKKIDHAIQKGALADLLGSAGNENVQGETQKKLDVLSNDFLIDALKVHPHVGGLASEELDEFTPGQQDGKYLVLFDPLDGSSNIDINMCVGTIFSILPAKNSITQTQDFMQAGTEQVAAGYVLYGPSTMMALTCGEGVAFFTFDPESQTFILTSDAIQLDADTQEFAINASNQRHWEEPVKRYIDELLAGKTSVRGKDFNMRWVACMVADIHRILCRSGIFMYPYDLKDPSKAGRLRLMYEANPMSFLIEQAGGSATTGRVRIMDIQPNDLHQRVPVIIGSKNEVDLVTSYH</sequence>
<feature type="chain" id="PRO_0000364451" description="Fructose-1,6-bisphosphatase class 1">
    <location>
        <begin position="1"/>
        <end position="323"/>
    </location>
</feature>
<feature type="binding site" evidence="1">
    <location>
        <position position="88"/>
    </location>
    <ligand>
        <name>Mg(2+)</name>
        <dbReference type="ChEBI" id="CHEBI:18420"/>
        <label>1</label>
    </ligand>
</feature>
<feature type="binding site" evidence="1">
    <location>
        <position position="107"/>
    </location>
    <ligand>
        <name>Mg(2+)</name>
        <dbReference type="ChEBI" id="CHEBI:18420"/>
        <label>1</label>
    </ligand>
</feature>
<feature type="binding site" evidence="1">
    <location>
        <position position="107"/>
    </location>
    <ligand>
        <name>Mg(2+)</name>
        <dbReference type="ChEBI" id="CHEBI:18420"/>
        <label>2</label>
    </ligand>
</feature>
<feature type="binding site" evidence="1">
    <location>
        <position position="109"/>
    </location>
    <ligand>
        <name>Mg(2+)</name>
        <dbReference type="ChEBI" id="CHEBI:18420"/>
        <label>1</label>
    </ligand>
</feature>
<feature type="binding site" evidence="1">
    <location>
        <begin position="110"/>
        <end position="113"/>
    </location>
    <ligand>
        <name>substrate</name>
    </ligand>
</feature>
<feature type="binding site" evidence="1">
    <location>
        <position position="110"/>
    </location>
    <ligand>
        <name>Mg(2+)</name>
        <dbReference type="ChEBI" id="CHEBI:18420"/>
        <label>2</label>
    </ligand>
</feature>
<feature type="binding site" evidence="1">
    <location>
        <position position="200"/>
    </location>
    <ligand>
        <name>substrate</name>
    </ligand>
</feature>
<feature type="binding site" evidence="1">
    <location>
        <position position="272"/>
    </location>
    <ligand>
        <name>Mg(2+)</name>
        <dbReference type="ChEBI" id="CHEBI:18420"/>
        <label>2</label>
    </ligand>
</feature>